<proteinExistence type="inferred from homology"/>
<protein>
    <recommendedName>
        <fullName evidence="1">Chromosomal replication initiator protein DnaA</fullName>
    </recommendedName>
</protein>
<comment type="function">
    <text evidence="1">Plays an essential role in the initiation and regulation of chromosomal replication. ATP-DnaA binds to the origin of replication (oriC) to initiate formation of the DNA replication initiation complex once per cell cycle. Binds the DnaA box (a 9 base pair repeat at the origin) and separates the double-stranded (ds)DNA. Forms a right-handed helical filament on oriC DNA; dsDNA binds to the exterior of the filament while single-stranded (ss)DNA is stabiized in the filament's interior. The ATP-DnaA-oriC complex binds and stabilizes one strand of the AT-rich DNA unwinding element (DUE), permitting loading of DNA polymerase. After initiation quickly degrades to an ADP-DnaA complex that is not apt for DNA replication. Binds acidic phospholipids.</text>
</comment>
<comment type="subunit">
    <text evidence="1">Oligomerizes as a right-handed, spiral filament on DNA at oriC.</text>
</comment>
<comment type="subcellular location">
    <subcellularLocation>
        <location evidence="1">Cytoplasm</location>
    </subcellularLocation>
</comment>
<comment type="domain">
    <text evidence="1">Domain I is involved in oligomerization and binding regulators, domain II is flexibile and of varying length in different bacteria, domain III forms the AAA+ region, while domain IV binds dsDNA.</text>
</comment>
<comment type="similarity">
    <text evidence="1">Belongs to the DnaA family.</text>
</comment>
<feature type="chain" id="PRO_1000060019" description="Chromosomal replication initiator protein DnaA">
    <location>
        <begin position="1"/>
        <end position="524"/>
    </location>
</feature>
<feature type="region of interest" description="Domain I, interacts with DnaA modulators" evidence="1">
    <location>
        <begin position="1"/>
        <end position="73"/>
    </location>
</feature>
<feature type="region of interest" description="Domain II" evidence="1">
    <location>
        <begin position="73"/>
        <end position="187"/>
    </location>
</feature>
<feature type="region of interest" description="Disordered" evidence="2">
    <location>
        <begin position="86"/>
        <end position="173"/>
    </location>
</feature>
<feature type="region of interest" description="Domain III, AAA+ region" evidence="1">
    <location>
        <begin position="188"/>
        <end position="404"/>
    </location>
</feature>
<feature type="region of interest" description="Domain IV, binds dsDNA" evidence="1">
    <location>
        <begin position="405"/>
        <end position="524"/>
    </location>
</feature>
<feature type="compositionally biased region" description="Polar residues" evidence="2">
    <location>
        <begin position="86"/>
        <end position="95"/>
    </location>
</feature>
<feature type="compositionally biased region" description="Polar residues" evidence="2">
    <location>
        <begin position="106"/>
        <end position="126"/>
    </location>
</feature>
<feature type="compositionally biased region" description="Polar residues" evidence="2">
    <location>
        <begin position="153"/>
        <end position="165"/>
    </location>
</feature>
<feature type="binding site" evidence="1">
    <location>
        <position position="232"/>
    </location>
    <ligand>
        <name>ATP</name>
        <dbReference type="ChEBI" id="CHEBI:30616"/>
    </ligand>
</feature>
<feature type="binding site" evidence="1">
    <location>
        <position position="234"/>
    </location>
    <ligand>
        <name>ATP</name>
        <dbReference type="ChEBI" id="CHEBI:30616"/>
    </ligand>
</feature>
<feature type="binding site" evidence="1">
    <location>
        <position position="235"/>
    </location>
    <ligand>
        <name>ATP</name>
        <dbReference type="ChEBI" id="CHEBI:30616"/>
    </ligand>
</feature>
<feature type="binding site" evidence="1">
    <location>
        <position position="236"/>
    </location>
    <ligand>
        <name>ATP</name>
        <dbReference type="ChEBI" id="CHEBI:30616"/>
    </ligand>
</feature>
<evidence type="ECO:0000255" key="1">
    <source>
        <dbReference type="HAMAP-Rule" id="MF_00377"/>
    </source>
</evidence>
<evidence type="ECO:0000256" key="2">
    <source>
        <dbReference type="SAM" id="MobiDB-lite"/>
    </source>
</evidence>
<reference key="1">
    <citation type="journal article" date="2008" name="PLoS Genet.">
        <title>Complete genome sequence of the complex carbohydrate-degrading marine bacterium, Saccharophagus degradans strain 2-40 T.</title>
        <authorList>
            <person name="Weiner R.M."/>
            <person name="Taylor L.E. II"/>
            <person name="Henrissat B."/>
            <person name="Hauser L."/>
            <person name="Land M."/>
            <person name="Coutinho P.M."/>
            <person name="Rancurel C."/>
            <person name="Saunders E.H."/>
            <person name="Longmire A.G."/>
            <person name="Zhang H."/>
            <person name="Bayer E.A."/>
            <person name="Gilbert H.J."/>
            <person name="Larimer F."/>
            <person name="Zhulin I.B."/>
            <person name="Ekborg N.A."/>
            <person name="Lamed R."/>
            <person name="Richardson P.M."/>
            <person name="Borovok I."/>
            <person name="Hutcheson S."/>
        </authorList>
    </citation>
    <scope>NUCLEOTIDE SEQUENCE [LARGE SCALE GENOMIC DNA]</scope>
    <source>
        <strain>2-40 / ATCC 43961 / DSM 17024</strain>
    </source>
</reference>
<accession>Q21PW4</accession>
<name>DNAA_SACD2</name>
<sequence>MELPESAWEQCVSSLQSELPAQQFNTWIRPLRVQQAEASNQLHLIAPNRFVLDWVNDKFKSRIDELLSSADHHPITSVEISVAPRRSTSFETNQGVAARQKRQQEAPRQNIASSQPSNSYSRQPQQPAVEMPAESQMAQVELLPAAPPAPLNNGYNTESFAQPYNDNPMGQGKVDKVDVEGGLQHKSNLNPTFIFDNFVVGKSNQLGLAAATQVAENPGGSYNPLFIYGGVGLGKTHLMHAVGNALCVRKPGAKVVYLHSERFVADMVKALQLNAINDFKRYYRSVDALLIDDIQFFAGKERSQEEFFHTFNALLEGGQQIILTCDRYPKEINGLEERLKSRFGWGLTVAIEPPELETRVAILKRKAEQVGAPLPNDAAFFIAQRIRSNVRELEGALKRVIANAHFTGRDISVELVREALKDLLALQDRLVSIDNIQRVVAEYYKIKVSDLHSKRRSRSVARPRQVAMYLAKDLTHHSLPEIGEAFGGRDHTTVLHACRKIKEMIESDADIREDVKNLLRTLTT</sequence>
<organism>
    <name type="scientific">Saccharophagus degradans (strain 2-40 / ATCC 43961 / DSM 17024)</name>
    <dbReference type="NCBI Taxonomy" id="203122"/>
    <lineage>
        <taxon>Bacteria</taxon>
        <taxon>Pseudomonadati</taxon>
        <taxon>Pseudomonadota</taxon>
        <taxon>Gammaproteobacteria</taxon>
        <taxon>Cellvibrionales</taxon>
        <taxon>Cellvibrionaceae</taxon>
        <taxon>Saccharophagus</taxon>
    </lineage>
</organism>
<gene>
    <name evidence="1" type="primary">dnaA</name>
    <name type="ordered locus">Sde_0001</name>
</gene>
<keyword id="KW-0067">ATP-binding</keyword>
<keyword id="KW-0963">Cytoplasm</keyword>
<keyword id="KW-0235">DNA replication</keyword>
<keyword id="KW-0238">DNA-binding</keyword>
<keyword id="KW-0446">Lipid-binding</keyword>
<keyword id="KW-0547">Nucleotide-binding</keyword>
<keyword id="KW-1185">Reference proteome</keyword>
<dbReference type="EMBL" id="CP000282">
    <property type="protein sequence ID" value="ABD79265.1"/>
    <property type="molecule type" value="Genomic_DNA"/>
</dbReference>
<dbReference type="SMR" id="Q21PW4"/>
<dbReference type="STRING" id="203122.Sde_0001"/>
<dbReference type="KEGG" id="sde:Sde_0001"/>
<dbReference type="eggNOG" id="COG0593">
    <property type="taxonomic scope" value="Bacteria"/>
</dbReference>
<dbReference type="HOGENOM" id="CLU_026910_0_1_6"/>
<dbReference type="Proteomes" id="UP000001947">
    <property type="component" value="Chromosome"/>
</dbReference>
<dbReference type="GO" id="GO:0005737">
    <property type="term" value="C:cytoplasm"/>
    <property type="evidence" value="ECO:0007669"/>
    <property type="project" value="UniProtKB-SubCell"/>
</dbReference>
<dbReference type="GO" id="GO:0005886">
    <property type="term" value="C:plasma membrane"/>
    <property type="evidence" value="ECO:0007669"/>
    <property type="project" value="TreeGrafter"/>
</dbReference>
<dbReference type="GO" id="GO:0005524">
    <property type="term" value="F:ATP binding"/>
    <property type="evidence" value="ECO:0007669"/>
    <property type="project" value="UniProtKB-UniRule"/>
</dbReference>
<dbReference type="GO" id="GO:0016887">
    <property type="term" value="F:ATP hydrolysis activity"/>
    <property type="evidence" value="ECO:0007669"/>
    <property type="project" value="InterPro"/>
</dbReference>
<dbReference type="GO" id="GO:0003688">
    <property type="term" value="F:DNA replication origin binding"/>
    <property type="evidence" value="ECO:0007669"/>
    <property type="project" value="UniProtKB-UniRule"/>
</dbReference>
<dbReference type="GO" id="GO:0008289">
    <property type="term" value="F:lipid binding"/>
    <property type="evidence" value="ECO:0007669"/>
    <property type="project" value="UniProtKB-KW"/>
</dbReference>
<dbReference type="GO" id="GO:0006270">
    <property type="term" value="P:DNA replication initiation"/>
    <property type="evidence" value="ECO:0007669"/>
    <property type="project" value="UniProtKB-UniRule"/>
</dbReference>
<dbReference type="GO" id="GO:0006275">
    <property type="term" value="P:regulation of DNA replication"/>
    <property type="evidence" value="ECO:0007669"/>
    <property type="project" value="UniProtKB-UniRule"/>
</dbReference>
<dbReference type="CDD" id="cd00009">
    <property type="entry name" value="AAA"/>
    <property type="match status" value="1"/>
</dbReference>
<dbReference type="CDD" id="cd06571">
    <property type="entry name" value="Bac_DnaA_C"/>
    <property type="match status" value="1"/>
</dbReference>
<dbReference type="FunFam" id="1.10.1750.10:FF:000001">
    <property type="entry name" value="Chromosomal replication initiator protein DnaA"/>
    <property type="match status" value="1"/>
</dbReference>
<dbReference type="FunFam" id="1.10.8.60:FF:000003">
    <property type="entry name" value="Chromosomal replication initiator protein DnaA"/>
    <property type="match status" value="1"/>
</dbReference>
<dbReference type="FunFam" id="3.40.50.300:FF:000103">
    <property type="entry name" value="Chromosomal replication initiator protein DnaA"/>
    <property type="match status" value="1"/>
</dbReference>
<dbReference type="Gene3D" id="1.10.1750.10">
    <property type="match status" value="1"/>
</dbReference>
<dbReference type="Gene3D" id="1.10.8.60">
    <property type="match status" value="1"/>
</dbReference>
<dbReference type="Gene3D" id="3.30.300.180">
    <property type="match status" value="1"/>
</dbReference>
<dbReference type="Gene3D" id="3.40.50.300">
    <property type="entry name" value="P-loop containing nucleotide triphosphate hydrolases"/>
    <property type="match status" value="1"/>
</dbReference>
<dbReference type="HAMAP" id="MF_00377">
    <property type="entry name" value="DnaA_bact"/>
    <property type="match status" value="1"/>
</dbReference>
<dbReference type="InterPro" id="IPR003593">
    <property type="entry name" value="AAA+_ATPase"/>
</dbReference>
<dbReference type="InterPro" id="IPR001957">
    <property type="entry name" value="Chromosome_initiator_DnaA"/>
</dbReference>
<dbReference type="InterPro" id="IPR020591">
    <property type="entry name" value="Chromosome_initiator_DnaA-like"/>
</dbReference>
<dbReference type="InterPro" id="IPR018312">
    <property type="entry name" value="Chromosome_initiator_DnaA_CS"/>
</dbReference>
<dbReference type="InterPro" id="IPR013159">
    <property type="entry name" value="DnaA_C"/>
</dbReference>
<dbReference type="InterPro" id="IPR013317">
    <property type="entry name" value="DnaA_dom"/>
</dbReference>
<dbReference type="InterPro" id="IPR024633">
    <property type="entry name" value="DnaA_N_dom"/>
</dbReference>
<dbReference type="InterPro" id="IPR038454">
    <property type="entry name" value="DnaA_N_sf"/>
</dbReference>
<dbReference type="InterPro" id="IPR027417">
    <property type="entry name" value="P-loop_NTPase"/>
</dbReference>
<dbReference type="InterPro" id="IPR010921">
    <property type="entry name" value="Trp_repressor/repl_initiator"/>
</dbReference>
<dbReference type="NCBIfam" id="TIGR00362">
    <property type="entry name" value="DnaA"/>
    <property type="match status" value="1"/>
</dbReference>
<dbReference type="PANTHER" id="PTHR30050">
    <property type="entry name" value="CHROMOSOMAL REPLICATION INITIATOR PROTEIN DNAA"/>
    <property type="match status" value="1"/>
</dbReference>
<dbReference type="PANTHER" id="PTHR30050:SF2">
    <property type="entry name" value="CHROMOSOMAL REPLICATION INITIATOR PROTEIN DNAA"/>
    <property type="match status" value="1"/>
</dbReference>
<dbReference type="Pfam" id="PF00308">
    <property type="entry name" value="Bac_DnaA"/>
    <property type="match status" value="1"/>
</dbReference>
<dbReference type="Pfam" id="PF08299">
    <property type="entry name" value="Bac_DnaA_C"/>
    <property type="match status" value="1"/>
</dbReference>
<dbReference type="Pfam" id="PF11638">
    <property type="entry name" value="DnaA_N"/>
    <property type="match status" value="1"/>
</dbReference>
<dbReference type="PRINTS" id="PR00051">
    <property type="entry name" value="DNAA"/>
</dbReference>
<dbReference type="SMART" id="SM00382">
    <property type="entry name" value="AAA"/>
    <property type="match status" value="1"/>
</dbReference>
<dbReference type="SMART" id="SM00760">
    <property type="entry name" value="Bac_DnaA_C"/>
    <property type="match status" value="1"/>
</dbReference>
<dbReference type="SUPFAM" id="SSF52540">
    <property type="entry name" value="P-loop containing nucleoside triphosphate hydrolases"/>
    <property type="match status" value="1"/>
</dbReference>
<dbReference type="SUPFAM" id="SSF48295">
    <property type="entry name" value="TrpR-like"/>
    <property type="match status" value="1"/>
</dbReference>
<dbReference type="PROSITE" id="PS01008">
    <property type="entry name" value="DNAA"/>
    <property type="match status" value="1"/>
</dbReference>